<protein>
    <recommendedName>
        <fullName>Acidic phospholipase A2 4</fullName>
        <shortName>svPLA2</shortName>
        <ecNumber>3.1.1.4</ecNumber>
    </recommendedName>
    <alternativeName>
        <fullName>Phosphatidylcholine 2-acylhydrolase</fullName>
    </alternativeName>
</protein>
<accession>Q6T179</accession>
<organism>
    <name type="scientific">Naja sagittifera</name>
    <name type="common">Andaman cobra</name>
    <dbReference type="NCBI Taxonomy" id="195058"/>
    <lineage>
        <taxon>Eukaryota</taxon>
        <taxon>Metazoa</taxon>
        <taxon>Chordata</taxon>
        <taxon>Craniata</taxon>
        <taxon>Vertebrata</taxon>
        <taxon>Euteleostomi</taxon>
        <taxon>Lepidosauria</taxon>
        <taxon>Squamata</taxon>
        <taxon>Bifurcata</taxon>
        <taxon>Unidentata</taxon>
        <taxon>Episquamata</taxon>
        <taxon>Toxicofera</taxon>
        <taxon>Serpentes</taxon>
        <taxon>Colubroidea</taxon>
        <taxon>Elapidae</taxon>
        <taxon>Elapinae</taxon>
        <taxon>Naja</taxon>
    </lineage>
</organism>
<reference key="1">
    <citation type="journal article" date="2005" name="Toxicon">
        <title>Crystal structure of a novel phospholipase A2 from Naja naja sagittifera with a strong anticoagulant activity.</title>
        <authorList>
            <person name="Jabeen T."/>
            <person name="Singh N."/>
            <person name="Singh R.K."/>
            <person name="Ethayathulla A.S."/>
            <person name="Sharma S."/>
            <person name="Srinivasan A."/>
            <person name="Singh T.P."/>
        </authorList>
    </citation>
    <scope>NUCLEOTIDE SEQUENCE [MRNA]</scope>
    <scope>X-RAY CRYSTALLOGRAPHY (1.86 ANGSTROMS) IN COMPLEX WITH CALCIUM ION</scope>
    <scope>COFACTOR</scope>
    <scope>DISULFIDE BONDS</scope>
    <source>
        <tissue>Venom</tissue>
        <tissue>Venom gland</tissue>
    </source>
</reference>
<name>PA2A4_NAJSG</name>
<sequence>SNRPMPLNIYQFKNMIQCTVPSRSWWDFADYGCYCGRGGSGTPVDDLDRCCQVHDNCYNQAQEITGCRPKWKTYTYECSQGTLTCKGRNNACAATVCDCDRLAAICFAGAPYNDNNYNIDLKARCQ</sequence>
<proteinExistence type="evidence at protein level"/>
<evidence type="ECO:0000250" key="1"/>
<evidence type="ECO:0000255" key="2"/>
<evidence type="ECO:0000255" key="3">
    <source>
        <dbReference type="PROSITE-ProRule" id="PRU10035"/>
    </source>
</evidence>
<evidence type="ECO:0000255" key="4">
    <source>
        <dbReference type="PROSITE-ProRule" id="PRU10036"/>
    </source>
</evidence>
<evidence type="ECO:0000269" key="5">
    <source>
    </source>
</evidence>
<evidence type="ECO:0000305" key="6"/>
<evidence type="ECO:0000305" key="7">
    <source>
    </source>
</evidence>
<evidence type="ECO:0007744" key="8">
    <source>
        <dbReference type="PDB" id="1YXH"/>
    </source>
</evidence>
<evidence type="ECO:0007829" key="9">
    <source>
        <dbReference type="PDB" id="1YXH"/>
    </source>
</evidence>
<keyword id="KW-0002">3D-structure</keyword>
<keyword id="KW-1203">Blood coagulation cascade inhibiting toxin</keyword>
<keyword id="KW-0106">Calcium</keyword>
<keyword id="KW-1015">Disulfide bond</keyword>
<keyword id="KW-1199">Hemostasis impairing toxin</keyword>
<keyword id="KW-0378">Hydrolase</keyword>
<keyword id="KW-0442">Lipid degradation</keyword>
<keyword id="KW-0443">Lipid metabolism</keyword>
<keyword id="KW-0479">Metal-binding</keyword>
<keyword id="KW-0964">Secreted</keyword>
<keyword id="KW-0732">Signal</keyword>
<keyword id="KW-0800">Toxin</keyword>
<feature type="signal peptide" evidence="2">
    <location>
        <begin position="1" status="less than"/>
        <end position="1"/>
    </location>
</feature>
<feature type="propeptide" id="PRO_0000346751" evidence="1">
    <location>
        <begin position="2"/>
        <end position="7"/>
    </location>
</feature>
<feature type="chain" id="PRO_5000092373" description="Acidic phospholipase A2 4">
    <location>
        <begin position="8"/>
        <end position="126"/>
    </location>
</feature>
<feature type="active site" evidence="7">
    <location>
        <position position="54"/>
    </location>
</feature>
<feature type="active site" evidence="7">
    <location>
        <position position="100"/>
    </location>
</feature>
<feature type="binding site" evidence="5 8">
    <location>
        <position position="34"/>
    </location>
    <ligand>
        <name>Ca(2+)</name>
        <dbReference type="ChEBI" id="CHEBI:29108"/>
    </ligand>
</feature>
<feature type="binding site" evidence="5 8">
    <location>
        <position position="36"/>
    </location>
    <ligand>
        <name>Ca(2+)</name>
        <dbReference type="ChEBI" id="CHEBI:29108"/>
    </ligand>
</feature>
<feature type="binding site" evidence="5 8">
    <location>
        <position position="38"/>
    </location>
    <ligand>
        <name>Ca(2+)</name>
        <dbReference type="ChEBI" id="CHEBI:29108"/>
    </ligand>
</feature>
<feature type="binding site" evidence="5 8">
    <location>
        <position position="55"/>
    </location>
    <ligand>
        <name>Ca(2+)</name>
        <dbReference type="ChEBI" id="CHEBI:29108"/>
    </ligand>
</feature>
<feature type="disulfide bond" evidence="5 8">
    <location>
        <begin position="18"/>
        <end position="78"/>
    </location>
</feature>
<feature type="disulfide bond" evidence="5 8">
    <location>
        <begin position="33"/>
        <end position="125"/>
    </location>
</feature>
<feature type="disulfide bond" evidence="5 8">
    <location>
        <begin position="35"/>
        <end position="51"/>
    </location>
</feature>
<feature type="disulfide bond" evidence="5 8">
    <location>
        <begin position="50"/>
        <end position="106"/>
    </location>
</feature>
<feature type="disulfide bond" evidence="5 8">
    <location>
        <begin position="57"/>
        <end position="99"/>
    </location>
</feature>
<feature type="disulfide bond" evidence="5 8">
    <location>
        <begin position="67"/>
        <end position="92"/>
    </location>
</feature>
<feature type="disulfide bond" evidence="5 8">
    <location>
        <begin position="85"/>
        <end position="97"/>
    </location>
</feature>
<feature type="non-terminal residue">
    <location>
        <position position="1"/>
    </location>
</feature>
<feature type="helix" evidence="9">
    <location>
        <begin position="9"/>
        <end position="19"/>
    </location>
</feature>
<feature type="helix" evidence="9">
    <location>
        <begin position="25"/>
        <end position="28"/>
    </location>
</feature>
<feature type="strand" evidence="9">
    <location>
        <begin position="29"/>
        <end position="31"/>
    </location>
</feature>
<feature type="turn" evidence="9">
    <location>
        <begin position="32"/>
        <end position="34"/>
    </location>
</feature>
<feature type="strand" evidence="9">
    <location>
        <begin position="35"/>
        <end position="37"/>
    </location>
</feature>
<feature type="helix" evidence="9">
    <location>
        <begin position="46"/>
        <end position="61"/>
    </location>
</feature>
<feature type="turn" evidence="9">
    <location>
        <begin position="69"/>
        <end position="71"/>
    </location>
</feature>
<feature type="strand" evidence="9">
    <location>
        <begin position="76"/>
        <end position="79"/>
    </location>
</feature>
<feature type="strand" evidence="9">
    <location>
        <begin position="82"/>
        <end position="85"/>
    </location>
</feature>
<feature type="helix" evidence="9">
    <location>
        <begin position="91"/>
        <end position="109"/>
    </location>
</feature>
<feature type="helix" evidence="9">
    <location>
        <begin position="114"/>
        <end position="116"/>
    </location>
</feature>
<feature type="helix" evidence="9">
    <location>
        <begin position="121"/>
        <end position="124"/>
    </location>
</feature>
<dbReference type="EC" id="3.1.1.4"/>
<dbReference type="EMBL" id="AY443496">
    <property type="protein sequence ID" value="AAR16428.1"/>
    <property type="molecule type" value="mRNA"/>
</dbReference>
<dbReference type="PDB" id="1YXH">
    <property type="method" value="X-ray"/>
    <property type="resolution" value="1.86 A"/>
    <property type="chains" value="A=1-126"/>
</dbReference>
<dbReference type="PDBsum" id="1YXH"/>
<dbReference type="SMR" id="Q6T179"/>
<dbReference type="BRENDA" id="3.1.1.4">
    <property type="organism ID" value="8192"/>
</dbReference>
<dbReference type="EvolutionaryTrace" id="Q6T179"/>
<dbReference type="GO" id="GO:0005576">
    <property type="term" value="C:extracellular region"/>
    <property type="evidence" value="ECO:0007669"/>
    <property type="project" value="UniProtKB-SubCell"/>
</dbReference>
<dbReference type="GO" id="GO:0005509">
    <property type="term" value="F:calcium ion binding"/>
    <property type="evidence" value="ECO:0007669"/>
    <property type="project" value="InterPro"/>
</dbReference>
<dbReference type="GO" id="GO:0047498">
    <property type="term" value="F:calcium-dependent phospholipase A2 activity"/>
    <property type="evidence" value="ECO:0007669"/>
    <property type="project" value="TreeGrafter"/>
</dbReference>
<dbReference type="GO" id="GO:0005543">
    <property type="term" value="F:phospholipid binding"/>
    <property type="evidence" value="ECO:0007669"/>
    <property type="project" value="TreeGrafter"/>
</dbReference>
<dbReference type="GO" id="GO:0005102">
    <property type="term" value="F:signaling receptor binding"/>
    <property type="evidence" value="ECO:0007669"/>
    <property type="project" value="TreeGrafter"/>
</dbReference>
<dbReference type="GO" id="GO:0090729">
    <property type="term" value="F:toxin activity"/>
    <property type="evidence" value="ECO:0007669"/>
    <property type="project" value="UniProtKB-KW"/>
</dbReference>
<dbReference type="GO" id="GO:0050482">
    <property type="term" value="P:arachidonate secretion"/>
    <property type="evidence" value="ECO:0007669"/>
    <property type="project" value="InterPro"/>
</dbReference>
<dbReference type="GO" id="GO:0006633">
    <property type="term" value="P:fatty acid biosynthetic process"/>
    <property type="evidence" value="ECO:0007669"/>
    <property type="project" value="TreeGrafter"/>
</dbReference>
<dbReference type="GO" id="GO:0016042">
    <property type="term" value="P:lipid catabolic process"/>
    <property type="evidence" value="ECO:0007669"/>
    <property type="project" value="UniProtKB-KW"/>
</dbReference>
<dbReference type="GO" id="GO:0006644">
    <property type="term" value="P:phospholipid metabolic process"/>
    <property type="evidence" value="ECO:0007669"/>
    <property type="project" value="InterPro"/>
</dbReference>
<dbReference type="GO" id="GO:0048146">
    <property type="term" value="P:positive regulation of fibroblast proliferation"/>
    <property type="evidence" value="ECO:0007669"/>
    <property type="project" value="TreeGrafter"/>
</dbReference>
<dbReference type="CDD" id="cd00125">
    <property type="entry name" value="PLA2c"/>
    <property type="match status" value="1"/>
</dbReference>
<dbReference type="FunFam" id="1.20.90.10:FF:000007">
    <property type="entry name" value="Acidic phospholipase A2"/>
    <property type="match status" value="1"/>
</dbReference>
<dbReference type="Gene3D" id="1.20.90.10">
    <property type="entry name" value="Phospholipase A2 domain"/>
    <property type="match status" value="1"/>
</dbReference>
<dbReference type="InterPro" id="IPR001211">
    <property type="entry name" value="PLipase_A2"/>
</dbReference>
<dbReference type="InterPro" id="IPR033112">
    <property type="entry name" value="PLipase_A2_Asp_AS"/>
</dbReference>
<dbReference type="InterPro" id="IPR016090">
    <property type="entry name" value="PLipase_A2_dom"/>
</dbReference>
<dbReference type="InterPro" id="IPR036444">
    <property type="entry name" value="PLipase_A2_dom_sf"/>
</dbReference>
<dbReference type="InterPro" id="IPR033113">
    <property type="entry name" value="PLipase_A2_His_AS"/>
</dbReference>
<dbReference type="PANTHER" id="PTHR11716:SF94">
    <property type="entry name" value="PHOSPHOLIPASE A2"/>
    <property type="match status" value="1"/>
</dbReference>
<dbReference type="PANTHER" id="PTHR11716">
    <property type="entry name" value="PHOSPHOLIPASE A2 FAMILY MEMBER"/>
    <property type="match status" value="1"/>
</dbReference>
<dbReference type="Pfam" id="PF00068">
    <property type="entry name" value="Phospholip_A2_1"/>
    <property type="match status" value="1"/>
</dbReference>
<dbReference type="PRINTS" id="PR00389">
    <property type="entry name" value="PHPHLIPASEA2"/>
</dbReference>
<dbReference type="SMART" id="SM00085">
    <property type="entry name" value="PA2c"/>
    <property type="match status" value="1"/>
</dbReference>
<dbReference type="SUPFAM" id="SSF48619">
    <property type="entry name" value="Phospholipase A2, PLA2"/>
    <property type="match status" value="1"/>
</dbReference>
<dbReference type="PROSITE" id="PS00119">
    <property type="entry name" value="PA2_ASP"/>
    <property type="match status" value="1"/>
</dbReference>
<dbReference type="PROSITE" id="PS00118">
    <property type="entry name" value="PA2_HIS"/>
    <property type="match status" value="1"/>
</dbReference>
<comment type="function">
    <text>Snake venom phospholipase A2 (PLA2) that exhibits strong anticoagulant activity, which is not due to the catalytic activity. PLA2 catalyzes the calcium-dependent hydrolysis of the 2-acyl groups in 3-sn-phosphoglycerides.</text>
</comment>
<comment type="catalytic activity">
    <reaction evidence="3 4">
        <text>a 1,2-diacyl-sn-glycero-3-phosphocholine + H2O = a 1-acyl-sn-glycero-3-phosphocholine + a fatty acid + H(+)</text>
        <dbReference type="Rhea" id="RHEA:15801"/>
        <dbReference type="ChEBI" id="CHEBI:15377"/>
        <dbReference type="ChEBI" id="CHEBI:15378"/>
        <dbReference type="ChEBI" id="CHEBI:28868"/>
        <dbReference type="ChEBI" id="CHEBI:57643"/>
        <dbReference type="ChEBI" id="CHEBI:58168"/>
        <dbReference type="EC" id="3.1.1.4"/>
    </reaction>
</comment>
<comment type="cofactor">
    <cofactor evidence="7">
        <name>Ca(2+)</name>
        <dbReference type="ChEBI" id="CHEBI:29108"/>
    </cofactor>
    <text evidence="7">Binds 1 Ca(2+) ion.</text>
</comment>
<comment type="subunit">
    <text>Monomer.</text>
</comment>
<comment type="subcellular location">
    <subcellularLocation>
        <location>Secreted</location>
    </subcellularLocation>
</comment>
<comment type="tissue specificity">
    <text>Expressed by the venom gland.</text>
</comment>
<comment type="similarity">
    <text evidence="6">Belongs to the phospholipase A2 family. Group I subfamily. D49 sub-subfamily.</text>
</comment>